<reference key="1">
    <citation type="journal article" date="2003" name="Genome Res.">
        <title>Genome sequence of an M3 strain of Streptococcus pyogenes reveals a large-scale genomic rearrangement in invasive strains and new insights into phage evolution.</title>
        <authorList>
            <person name="Nakagawa I."/>
            <person name="Kurokawa K."/>
            <person name="Yamashita A."/>
            <person name="Nakata M."/>
            <person name="Tomiyasu Y."/>
            <person name="Okahashi N."/>
            <person name="Kawabata S."/>
            <person name="Yamazaki K."/>
            <person name="Shiba T."/>
            <person name="Yasunaga T."/>
            <person name="Hayashi H."/>
            <person name="Hattori M."/>
            <person name="Hamada S."/>
        </authorList>
    </citation>
    <scope>NUCLEOTIDE SEQUENCE [LARGE SCALE GENOMIC DNA]</scope>
    <source>
        <strain>SSI-1</strain>
    </source>
</reference>
<dbReference type="EC" id="3.1.26.11" evidence="1"/>
<dbReference type="EMBL" id="BA000034">
    <property type="protein sequence ID" value="BAC64310.1"/>
    <property type="molecule type" value="Genomic_DNA"/>
</dbReference>
<dbReference type="RefSeq" id="WP_002984894.1">
    <property type="nucleotide sequence ID" value="NC_004606.1"/>
</dbReference>
<dbReference type="SMR" id="P0DF23"/>
<dbReference type="KEGG" id="sps:SPs1215"/>
<dbReference type="HOGENOM" id="CLU_031317_2_0_9"/>
<dbReference type="GO" id="GO:0042781">
    <property type="term" value="F:3'-tRNA processing endoribonuclease activity"/>
    <property type="evidence" value="ECO:0007669"/>
    <property type="project" value="UniProtKB-UniRule"/>
</dbReference>
<dbReference type="GO" id="GO:0008270">
    <property type="term" value="F:zinc ion binding"/>
    <property type="evidence" value="ECO:0007669"/>
    <property type="project" value="UniProtKB-UniRule"/>
</dbReference>
<dbReference type="CDD" id="cd07717">
    <property type="entry name" value="RNaseZ_ZiPD-like_MBL-fold"/>
    <property type="match status" value="1"/>
</dbReference>
<dbReference type="FunFam" id="3.60.15.10:FF:000002">
    <property type="entry name" value="Ribonuclease Z"/>
    <property type="match status" value="1"/>
</dbReference>
<dbReference type="Gene3D" id="3.60.15.10">
    <property type="entry name" value="Ribonuclease Z/Hydroxyacylglutathione hydrolase-like"/>
    <property type="match status" value="1"/>
</dbReference>
<dbReference type="HAMAP" id="MF_01818">
    <property type="entry name" value="RNase_Z_BN"/>
    <property type="match status" value="1"/>
</dbReference>
<dbReference type="InterPro" id="IPR001279">
    <property type="entry name" value="Metallo-B-lactamas"/>
</dbReference>
<dbReference type="InterPro" id="IPR036866">
    <property type="entry name" value="RibonucZ/Hydroxyglut_hydro"/>
</dbReference>
<dbReference type="InterPro" id="IPR013471">
    <property type="entry name" value="RNase_Z/BN"/>
</dbReference>
<dbReference type="NCBIfam" id="NF000801">
    <property type="entry name" value="PRK00055.1-3"/>
    <property type="match status" value="1"/>
</dbReference>
<dbReference type="NCBIfam" id="TIGR02651">
    <property type="entry name" value="RNase_Z"/>
    <property type="match status" value="1"/>
</dbReference>
<dbReference type="PANTHER" id="PTHR46018">
    <property type="entry name" value="ZINC PHOSPHODIESTERASE ELAC PROTEIN 1"/>
    <property type="match status" value="1"/>
</dbReference>
<dbReference type="PANTHER" id="PTHR46018:SF2">
    <property type="entry name" value="ZINC PHOSPHODIESTERASE ELAC PROTEIN 1"/>
    <property type="match status" value="1"/>
</dbReference>
<dbReference type="Pfam" id="PF00753">
    <property type="entry name" value="Lactamase_B"/>
    <property type="match status" value="1"/>
</dbReference>
<dbReference type="SUPFAM" id="SSF56281">
    <property type="entry name" value="Metallo-hydrolase/oxidoreductase"/>
    <property type="match status" value="1"/>
</dbReference>
<protein>
    <recommendedName>
        <fullName evidence="1">Ribonuclease Z</fullName>
        <shortName evidence="1">RNase Z</shortName>
        <ecNumber evidence="1">3.1.26.11</ecNumber>
    </recommendedName>
    <alternativeName>
        <fullName evidence="1">tRNA 3 endonuclease</fullName>
    </alternativeName>
    <alternativeName>
        <fullName evidence="1">tRNase Z</fullName>
    </alternativeName>
</protein>
<name>RNZ_STRPQ</name>
<evidence type="ECO:0000255" key="1">
    <source>
        <dbReference type="HAMAP-Rule" id="MF_01818"/>
    </source>
</evidence>
<gene>
    <name evidence="1" type="primary">rnz</name>
    <name type="ordered locus">SPs1215</name>
</gene>
<comment type="function">
    <text evidence="1">Zinc phosphodiesterase, which displays some tRNA 3'-processing endonuclease activity. Probably involved in tRNA maturation, by removing a 3'-trailer from precursor tRNA.</text>
</comment>
<comment type="catalytic activity">
    <reaction evidence="1">
        <text>Endonucleolytic cleavage of RNA, removing extra 3' nucleotides from tRNA precursor, generating 3' termini of tRNAs. A 3'-hydroxy group is left at the tRNA terminus and a 5'-phosphoryl group is left at the trailer molecule.</text>
        <dbReference type="EC" id="3.1.26.11"/>
    </reaction>
</comment>
<comment type="cofactor">
    <cofactor evidence="1">
        <name>Zn(2+)</name>
        <dbReference type="ChEBI" id="CHEBI:29105"/>
    </cofactor>
    <text evidence="1">Binds 2 Zn(2+) ions.</text>
</comment>
<comment type="subunit">
    <text evidence="1">Homodimer.</text>
</comment>
<comment type="similarity">
    <text evidence="1">Belongs to the RNase Z family.</text>
</comment>
<sequence>MELQFLGTGAGQPAKQRNVSSLALKLLDEINEVWMFDCGEGTQRQILETTIKPRKIRKIFITHLHGDHIFGLPGFLSSRSFQASEEQTDLDIYGPIGIKTYVLTSLKVSGARVPYQIHFHEFDDKSLGKIMETDKFEVYAERLAHTIFCMGYRVVQKDLEGTLDAEALKAAGVPFGPLFGKIKNGQDVELEDGRLICAKDYISAPKKGKIITIIGDTRKTSASVKLAKDADVLVHESTYGKGDERIARNHGHSTNMQAAQIAHEAGAKRLLLNHVSARFLGRDCRQMEKDAATIFENVKMVQDLEEVII</sequence>
<feature type="chain" id="PRO_0000411551" description="Ribonuclease Z">
    <location>
        <begin position="1"/>
        <end position="309"/>
    </location>
</feature>
<feature type="active site" description="Proton acceptor" evidence="1">
    <location>
        <position position="67"/>
    </location>
</feature>
<feature type="binding site" evidence="1">
    <location>
        <position position="63"/>
    </location>
    <ligand>
        <name>Zn(2+)</name>
        <dbReference type="ChEBI" id="CHEBI:29105"/>
        <label>1</label>
        <note>catalytic</note>
    </ligand>
</feature>
<feature type="binding site" evidence="1">
    <location>
        <position position="65"/>
    </location>
    <ligand>
        <name>Zn(2+)</name>
        <dbReference type="ChEBI" id="CHEBI:29105"/>
        <label>1</label>
        <note>catalytic</note>
    </ligand>
</feature>
<feature type="binding site" evidence="1">
    <location>
        <position position="67"/>
    </location>
    <ligand>
        <name>Zn(2+)</name>
        <dbReference type="ChEBI" id="CHEBI:29105"/>
        <label>2</label>
        <note>catalytic</note>
    </ligand>
</feature>
<feature type="binding site" evidence="1">
    <location>
        <position position="68"/>
    </location>
    <ligand>
        <name>Zn(2+)</name>
        <dbReference type="ChEBI" id="CHEBI:29105"/>
        <label>2</label>
        <note>catalytic</note>
    </ligand>
</feature>
<feature type="binding site" evidence="1">
    <location>
        <position position="145"/>
    </location>
    <ligand>
        <name>Zn(2+)</name>
        <dbReference type="ChEBI" id="CHEBI:29105"/>
        <label>1</label>
        <note>catalytic</note>
    </ligand>
</feature>
<feature type="binding site" evidence="1">
    <location>
        <position position="216"/>
    </location>
    <ligand>
        <name>Zn(2+)</name>
        <dbReference type="ChEBI" id="CHEBI:29105"/>
        <label>1</label>
        <note>catalytic</note>
    </ligand>
</feature>
<feature type="binding site" evidence="1">
    <location>
        <position position="216"/>
    </location>
    <ligand>
        <name>Zn(2+)</name>
        <dbReference type="ChEBI" id="CHEBI:29105"/>
        <label>2</label>
        <note>catalytic</note>
    </ligand>
</feature>
<feature type="binding site" evidence="1">
    <location>
        <position position="274"/>
    </location>
    <ligand>
        <name>Zn(2+)</name>
        <dbReference type="ChEBI" id="CHEBI:29105"/>
        <label>2</label>
        <note>catalytic</note>
    </ligand>
</feature>
<keyword id="KW-0255">Endonuclease</keyword>
<keyword id="KW-0378">Hydrolase</keyword>
<keyword id="KW-0479">Metal-binding</keyword>
<keyword id="KW-0540">Nuclease</keyword>
<keyword id="KW-0819">tRNA processing</keyword>
<keyword id="KW-0862">Zinc</keyword>
<organism>
    <name type="scientific">Streptococcus pyogenes serotype M3 (strain SSI-1)</name>
    <dbReference type="NCBI Taxonomy" id="193567"/>
    <lineage>
        <taxon>Bacteria</taxon>
        <taxon>Bacillati</taxon>
        <taxon>Bacillota</taxon>
        <taxon>Bacilli</taxon>
        <taxon>Lactobacillales</taxon>
        <taxon>Streptococcaceae</taxon>
        <taxon>Streptococcus</taxon>
    </lineage>
</organism>
<accession>P0DF23</accession>
<accession>P60198</accession>
<accession>Q9A056</accession>
<proteinExistence type="inferred from homology"/>